<reference key="1">
    <citation type="journal article" date="2003" name="Proc. Natl. Acad. Sci. U.S.A.">
        <title>The complete genome sequence of Mycobacterium bovis.</title>
        <authorList>
            <person name="Garnier T."/>
            <person name="Eiglmeier K."/>
            <person name="Camus J.-C."/>
            <person name="Medina N."/>
            <person name="Mansoor H."/>
            <person name="Pryor M."/>
            <person name="Duthoy S."/>
            <person name="Grondin S."/>
            <person name="Lacroix C."/>
            <person name="Monsempe C."/>
            <person name="Simon S."/>
            <person name="Harris B."/>
            <person name="Atkin R."/>
            <person name="Doggett J."/>
            <person name="Mayes R."/>
            <person name="Keating L."/>
            <person name="Wheeler P.R."/>
            <person name="Parkhill J."/>
            <person name="Barrell B.G."/>
            <person name="Cole S.T."/>
            <person name="Gordon S.V."/>
            <person name="Hewinson R.G."/>
        </authorList>
    </citation>
    <scope>NUCLEOTIDE SEQUENCE [LARGE SCALE GENOMIC DNA]</scope>
    <source>
        <strain>ATCC BAA-935 / AF2122/97</strain>
    </source>
</reference>
<reference key="2">
    <citation type="journal article" date="2017" name="Genome Announc.">
        <title>Updated reference genome sequence and annotation of Mycobacterium bovis AF2122/97.</title>
        <authorList>
            <person name="Malone K.M."/>
            <person name="Farrell D."/>
            <person name="Stuber T.P."/>
            <person name="Schubert O.T."/>
            <person name="Aebersold R."/>
            <person name="Robbe-Austerman S."/>
            <person name="Gordon S.V."/>
        </authorList>
    </citation>
    <scope>NUCLEOTIDE SEQUENCE [LARGE SCALE GENOMIC DNA]</scope>
    <scope>GENOME REANNOTATION</scope>
    <source>
        <strain>ATCC BAA-935 / AF2122/97</strain>
    </source>
</reference>
<evidence type="ECO:0000255" key="1">
    <source>
        <dbReference type="HAMAP-Rule" id="MF_01080"/>
    </source>
</evidence>
<gene>
    <name evidence="1" type="primary">truB</name>
    <name type="ordered locus">BQ2027_MB2816C</name>
</gene>
<protein>
    <recommendedName>
        <fullName evidence="1">tRNA pseudouridine synthase B</fullName>
        <ecNumber evidence="1">5.4.99.25</ecNumber>
    </recommendedName>
    <alternativeName>
        <fullName evidence="1">tRNA pseudouridine(55) synthase</fullName>
        <shortName evidence="1">Psi55 synthase</shortName>
    </alternativeName>
    <alternativeName>
        <fullName evidence="1">tRNA pseudouridylate synthase</fullName>
    </alternativeName>
    <alternativeName>
        <fullName evidence="1">tRNA-uridine isomerase</fullName>
    </alternativeName>
</protein>
<keyword id="KW-0413">Isomerase</keyword>
<keyword id="KW-1185">Reference proteome</keyword>
<keyword id="KW-0819">tRNA processing</keyword>
<dbReference type="EC" id="5.4.99.25" evidence="1"/>
<dbReference type="EMBL" id="LT708304">
    <property type="protein sequence ID" value="SIU01434.1"/>
    <property type="molecule type" value="Genomic_DNA"/>
</dbReference>
<dbReference type="RefSeq" id="NP_856462.1">
    <property type="nucleotide sequence ID" value="NC_002945.3"/>
</dbReference>
<dbReference type="RefSeq" id="WP_003414147.1">
    <property type="nucleotide sequence ID" value="NC_002945.4"/>
</dbReference>
<dbReference type="SMR" id="P62189"/>
<dbReference type="KEGG" id="mbo:BQ2027_MB2816C"/>
<dbReference type="PATRIC" id="fig|233413.5.peg.3087"/>
<dbReference type="Proteomes" id="UP000001419">
    <property type="component" value="Chromosome"/>
</dbReference>
<dbReference type="GO" id="GO:0003723">
    <property type="term" value="F:RNA binding"/>
    <property type="evidence" value="ECO:0007669"/>
    <property type="project" value="InterPro"/>
</dbReference>
<dbReference type="GO" id="GO:0160148">
    <property type="term" value="F:tRNA pseudouridine(55) synthase activity"/>
    <property type="evidence" value="ECO:0007669"/>
    <property type="project" value="UniProtKB-EC"/>
</dbReference>
<dbReference type="GO" id="GO:1990481">
    <property type="term" value="P:mRNA pseudouridine synthesis"/>
    <property type="evidence" value="ECO:0007669"/>
    <property type="project" value="TreeGrafter"/>
</dbReference>
<dbReference type="GO" id="GO:0031119">
    <property type="term" value="P:tRNA pseudouridine synthesis"/>
    <property type="evidence" value="ECO:0007669"/>
    <property type="project" value="UniProtKB-UniRule"/>
</dbReference>
<dbReference type="CDD" id="cd02573">
    <property type="entry name" value="PseudoU_synth_EcTruB"/>
    <property type="match status" value="1"/>
</dbReference>
<dbReference type="FunFam" id="3.30.2350.10:FF:000011">
    <property type="entry name" value="tRNA pseudouridine synthase B"/>
    <property type="match status" value="1"/>
</dbReference>
<dbReference type="Gene3D" id="3.30.2350.10">
    <property type="entry name" value="Pseudouridine synthase"/>
    <property type="match status" value="1"/>
</dbReference>
<dbReference type="Gene3D" id="2.30.130.10">
    <property type="entry name" value="PUA domain"/>
    <property type="match status" value="1"/>
</dbReference>
<dbReference type="HAMAP" id="MF_01080">
    <property type="entry name" value="TruB_bact"/>
    <property type="match status" value="1"/>
</dbReference>
<dbReference type="InterPro" id="IPR020103">
    <property type="entry name" value="PsdUridine_synth_cat_dom_sf"/>
</dbReference>
<dbReference type="InterPro" id="IPR002501">
    <property type="entry name" value="PsdUridine_synth_N"/>
</dbReference>
<dbReference type="InterPro" id="IPR015947">
    <property type="entry name" value="PUA-like_sf"/>
</dbReference>
<dbReference type="InterPro" id="IPR036974">
    <property type="entry name" value="PUA_sf"/>
</dbReference>
<dbReference type="InterPro" id="IPR015225">
    <property type="entry name" value="tRNA_psdUridine_synth_fam2_C"/>
</dbReference>
<dbReference type="InterPro" id="IPR014780">
    <property type="entry name" value="tRNA_psdUridine_synth_TruB"/>
</dbReference>
<dbReference type="InterPro" id="IPR032819">
    <property type="entry name" value="TruB_C"/>
</dbReference>
<dbReference type="NCBIfam" id="TIGR00431">
    <property type="entry name" value="TruB"/>
    <property type="match status" value="1"/>
</dbReference>
<dbReference type="PANTHER" id="PTHR13767:SF2">
    <property type="entry name" value="PSEUDOURIDYLATE SYNTHASE TRUB1"/>
    <property type="match status" value="1"/>
</dbReference>
<dbReference type="PANTHER" id="PTHR13767">
    <property type="entry name" value="TRNA-PSEUDOURIDINE SYNTHASE"/>
    <property type="match status" value="1"/>
</dbReference>
<dbReference type="Pfam" id="PF09142">
    <property type="entry name" value="TruB_C"/>
    <property type="match status" value="1"/>
</dbReference>
<dbReference type="Pfam" id="PF16198">
    <property type="entry name" value="TruB_C_2"/>
    <property type="match status" value="1"/>
</dbReference>
<dbReference type="Pfam" id="PF01509">
    <property type="entry name" value="TruB_N"/>
    <property type="match status" value="1"/>
</dbReference>
<dbReference type="SUPFAM" id="SSF55120">
    <property type="entry name" value="Pseudouridine synthase"/>
    <property type="match status" value="1"/>
</dbReference>
<dbReference type="SUPFAM" id="SSF88697">
    <property type="entry name" value="PUA domain-like"/>
    <property type="match status" value="1"/>
</dbReference>
<feature type="chain" id="PRO_0000121863" description="tRNA pseudouridine synthase B">
    <location>
        <begin position="1"/>
        <end position="298"/>
    </location>
</feature>
<feature type="active site" description="Nucleophile" evidence="1">
    <location>
        <position position="42"/>
    </location>
</feature>
<comment type="function">
    <text evidence="1">Responsible for synthesis of pseudouridine from uracil-55 in the psi GC loop of transfer RNAs.</text>
</comment>
<comment type="catalytic activity">
    <reaction evidence="1">
        <text>uridine(55) in tRNA = pseudouridine(55) in tRNA</text>
        <dbReference type="Rhea" id="RHEA:42532"/>
        <dbReference type="Rhea" id="RHEA-COMP:10101"/>
        <dbReference type="Rhea" id="RHEA-COMP:10102"/>
        <dbReference type="ChEBI" id="CHEBI:65314"/>
        <dbReference type="ChEBI" id="CHEBI:65315"/>
        <dbReference type="EC" id="5.4.99.25"/>
    </reaction>
</comment>
<comment type="similarity">
    <text evidence="1">Belongs to the pseudouridine synthase TruB family. Type 1 subfamily.</text>
</comment>
<accession>P62189</accession>
<accession>A0A1R3Y295</accession>
<accession>O33335</accession>
<accession>X2BLZ2</accession>
<proteinExistence type="inferred from homology"/>
<name>TRUB_MYCBO</name>
<organism>
    <name type="scientific">Mycobacterium bovis (strain ATCC BAA-935 / AF2122/97)</name>
    <dbReference type="NCBI Taxonomy" id="233413"/>
    <lineage>
        <taxon>Bacteria</taxon>
        <taxon>Bacillati</taxon>
        <taxon>Actinomycetota</taxon>
        <taxon>Actinomycetes</taxon>
        <taxon>Mycobacteriales</taxon>
        <taxon>Mycobacteriaceae</taxon>
        <taxon>Mycobacterium</taxon>
        <taxon>Mycobacterium tuberculosis complex</taxon>
    </lineage>
</organism>
<sequence length="298" mass="31820">MSATGPGIVVIDKPAGMTSHDVVGRCRRIFATRRVGHAGTLDPMATGVLVIGIERATKILGLLTAAPKSYAATIRLGQTTSTEDAEGQVLQSVPAKHLTIEAIDAAMERLRGEIRQVPSSVSAIKVGGRRAYRLARQGRSVQLEARPIRIDRFELLAARRRDQLIDIDVEIDCSSGTYIRALARDLGDALGVGGHVTALRRTRVGRFELDQARSLDDLAERPALSLSLDEACLLMFARRDLTAAEASAAANGRSLPAVGIDGVYAACDADGRVIALLRDEGSRTRSVAVLRPATMHPG</sequence>